<gene>
    <name evidence="1" type="primary">clpP</name>
    <name type="ordered locus">PP_2300</name>
</gene>
<organism>
    <name type="scientific">Pseudomonas putida (strain ATCC 47054 / DSM 6125 / CFBP 8728 / NCIMB 11950 / KT2440)</name>
    <dbReference type="NCBI Taxonomy" id="160488"/>
    <lineage>
        <taxon>Bacteria</taxon>
        <taxon>Pseudomonadati</taxon>
        <taxon>Pseudomonadota</taxon>
        <taxon>Gammaproteobacteria</taxon>
        <taxon>Pseudomonadales</taxon>
        <taxon>Pseudomonadaceae</taxon>
        <taxon>Pseudomonas</taxon>
    </lineage>
</organism>
<keyword id="KW-0963">Cytoplasm</keyword>
<keyword id="KW-0378">Hydrolase</keyword>
<keyword id="KW-0645">Protease</keyword>
<keyword id="KW-1185">Reference proteome</keyword>
<keyword id="KW-0720">Serine protease</keyword>
<name>CLPP_PSEPK</name>
<proteinExistence type="inferred from homology"/>
<accession>Q88KJ0</accession>
<comment type="function">
    <text evidence="1">Cleaves peptides in various proteins in a process that requires ATP hydrolysis. Has a chymotrypsin-like activity. Plays a major role in the degradation of misfolded proteins.</text>
</comment>
<comment type="catalytic activity">
    <reaction evidence="1">
        <text>Hydrolysis of proteins to small peptides in the presence of ATP and magnesium. alpha-casein is the usual test substrate. In the absence of ATP, only oligopeptides shorter than five residues are hydrolyzed (such as succinyl-Leu-Tyr-|-NHMec, and Leu-Tyr-Leu-|-Tyr-Trp, in which cleavage of the -Tyr-|-Leu- and -Tyr-|-Trp bonds also occurs).</text>
        <dbReference type="EC" id="3.4.21.92"/>
    </reaction>
</comment>
<comment type="subunit">
    <text evidence="1">Fourteen ClpP subunits assemble into 2 heptameric rings which stack back to back to give a disk-like structure with a central cavity, resembling the structure of eukaryotic proteasomes.</text>
</comment>
<comment type="subcellular location">
    <subcellularLocation>
        <location evidence="1">Cytoplasm</location>
    </subcellularLocation>
</comment>
<comment type="similarity">
    <text evidence="1">Belongs to the peptidase S14 family.</text>
</comment>
<sequence length="213" mass="23515">MSRNSYIQQSSDIQAAGGLVPMVIEQSARGERAYDIYSRLLKERVIFLVGPVEDYMANLVVAQLLFLEAENPDKDIHLYINSPGGSVTAGMSIYDTMQFIKPDVSTICIGQACSMGAFLLAAGAKGKRHCLPNSRVMIHQPLGGFQGQATDIEIHAQEILNIKARLNELLAYHTGQDLETIKRDTERDNFMSASRAAEYGLIDSVYDKRQLAS</sequence>
<protein>
    <recommendedName>
        <fullName evidence="1">ATP-dependent Clp protease proteolytic subunit</fullName>
        <ecNumber evidence="1">3.4.21.92</ecNumber>
    </recommendedName>
    <alternativeName>
        <fullName evidence="1">Endopeptidase Clp</fullName>
    </alternativeName>
</protein>
<reference key="1">
    <citation type="journal article" date="2002" name="Environ. Microbiol.">
        <title>Complete genome sequence and comparative analysis of the metabolically versatile Pseudomonas putida KT2440.</title>
        <authorList>
            <person name="Nelson K.E."/>
            <person name="Weinel C."/>
            <person name="Paulsen I.T."/>
            <person name="Dodson R.J."/>
            <person name="Hilbert H."/>
            <person name="Martins dos Santos V.A.P."/>
            <person name="Fouts D.E."/>
            <person name="Gill S.R."/>
            <person name="Pop M."/>
            <person name="Holmes M."/>
            <person name="Brinkac L.M."/>
            <person name="Beanan M.J."/>
            <person name="DeBoy R.T."/>
            <person name="Daugherty S.C."/>
            <person name="Kolonay J.F."/>
            <person name="Madupu R."/>
            <person name="Nelson W.C."/>
            <person name="White O."/>
            <person name="Peterson J.D."/>
            <person name="Khouri H.M."/>
            <person name="Hance I."/>
            <person name="Chris Lee P."/>
            <person name="Holtzapple E.K."/>
            <person name="Scanlan D."/>
            <person name="Tran K."/>
            <person name="Moazzez A."/>
            <person name="Utterback T.R."/>
            <person name="Rizzo M."/>
            <person name="Lee K."/>
            <person name="Kosack D."/>
            <person name="Moestl D."/>
            <person name="Wedler H."/>
            <person name="Lauber J."/>
            <person name="Stjepandic D."/>
            <person name="Hoheisel J."/>
            <person name="Straetz M."/>
            <person name="Heim S."/>
            <person name="Kiewitz C."/>
            <person name="Eisen J.A."/>
            <person name="Timmis K.N."/>
            <person name="Duesterhoeft A."/>
            <person name="Tuemmler B."/>
            <person name="Fraser C.M."/>
        </authorList>
    </citation>
    <scope>NUCLEOTIDE SEQUENCE [LARGE SCALE GENOMIC DNA]</scope>
    <source>
        <strain>ATCC 47054 / DSM 6125 / CFBP 8728 / NCIMB 11950 / KT2440</strain>
    </source>
</reference>
<feature type="chain" id="PRO_0000179628" description="ATP-dependent Clp protease proteolytic subunit">
    <location>
        <begin position="1"/>
        <end position="213"/>
    </location>
</feature>
<feature type="active site" description="Nucleophile" evidence="1">
    <location>
        <position position="114"/>
    </location>
</feature>
<feature type="active site" evidence="1">
    <location>
        <position position="139"/>
    </location>
</feature>
<evidence type="ECO:0000255" key="1">
    <source>
        <dbReference type="HAMAP-Rule" id="MF_00444"/>
    </source>
</evidence>
<dbReference type="EC" id="3.4.21.92" evidence="1"/>
<dbReference type="EMBL" id="AE015451">
    <property type="protein sequence ID" value="AAN67913.1"/>
    <property type="molecule type" value="Genomic_DNA"/>
</dbReference>
<dbReference type="RefSeq" id="NP_744449.1">
    <property type="nucleotide sequence ID" value="NC_002947.4"/>
</dbReference>
<dbReference type="RefSeq" id="WP_003259400.1">
    <property type="nucleotide sequence ID" value="NZ_CP169744.1"/>
</dbReference>
<dbReference type="SMR" id="Q88KJ0"/>
<dbReference type="STRING" id="160488.PP_2300"/>
<dbReference type="MEROPS" id="S14.001"/>
<dbReference type="PaxDb" id="160488-PP_2300"/>
<dbReference type="GeneID" id="97167304"/>
<dbReference type="KEGG" id="ppu:PP_2300"/>
<dbReference type="PATRIC" id="fig|160488.4.peg.2437"/>
<dbReference type="eggNOG" id="COG0740">
    <property type="taxonomic scope" value="Bacteria"/>
</dbReference>
<dbReference type="HOGENOM" id="CLU_058707_3_2_6"/>
<dbReference type="OrthoDB" id="9802800at2"/>
<dbReference type="PhylomeDB" id="Q88KJ0"/>
<dbReference type="BioCyc" id="PPUT160488:G1G01-2461-MONOMER"/>
<dbReference type="Proteomes" id="UP000000556">
    <property type="component" value="Chromosome"/>
</dbReference>
<dbReference type="GO" id="GO:0005737">
    <property type="term" value="C:cytoplasm"/>
    <property type="evidence" value="ECO:0007669"/>
    <property type="project" value="UniProtKB-SubCell"/>
</dbReference>
<dbReference type="GO" id="GO:0009368">
    <property type="term" value="C:endopeptidase Clp complex"/>
    <property type="evidence" value="ECO:0007669"/>
    <property type="project" value="TreeGrafter"/>
</dbReference>
<dbReference type="GO" id="GO:0004176">
    <property type="term" value="F:ATP-dependent peptidase activity"/>
    <property type="evidence" value="ECO:0007669"/>
    <property type="project" value="InterPro"/>
</dbReference>
<dbReference type="GO" id="GO:0051117">
    <property type="term" value="F:ATPase binding"/>
    <property type="evidence" value="ECO:0007669"/>
    <property type="project" value="TreeGrafter"/>
</dbReference>
<dbReference type="GO" id="GO:0004252">
    <property type="term" value="F:serine-type endopeptidase activity"/>
    <property type="evidence" value="ECO:0007669"/>
    <property type="project" value="UniProtKB-UniRule"/>
</dbReference>
<dbReference type="GO" id="GO:0006515">
    <property type="term" value="P:protein quality control for misfolded or incompletely synthesized proteins"/>
    <property type="evidence" value="ECO:0007669"/>
    <property type="project" value="TreeGrafter"/>
</dbReference>
<dbReference type="CDD" id="cd07017">
    <property type="entry name" value="S14_ClpP_2"/>
    <property type="match status" value="1"/>
</dbReference>
<dbReference type="FunFam" id="3.90.226.10:FF:000001">
    <property type="entry name" value="ATP-dependent Clp protease proteolytic subunit"/>
    <property type="match status" value="1"/>
</dbReference>
<dbReference type="Gene3D" id="3.90.226.10">
    <property type="entry name" value="2-enoyl-CoA Hydratase, Chain A, domain 1"/>
    <property type="match status" value="1"/>
</dbReference>
<dbReference type="HAMAP" id="MF_00444">
    <property type="entry name" value="ClpP"/>
    <property type="match status" value="1"/>
</dbReference>
<dbReference type="InterPro" id="IPR001907">
    <property type="entry name" value="ClpP"/>
</dbReference>
<dbReference type="InterPro" id="IPR029045">
    <property type="entry name" value="ClpP/crotonase-like_dom_sf"/>
</dbReference>
<dbReference type="InterPro" id="IPR023562">
    <property type="entry name" value="ClpP/TepA"/>
</dbReference>
<dbReference type="InterPro" id="IPR033135">
    <property type="entry name" value="ClpP_His_AS"/>
</dbReference>
<dbReference type="InterPro" id="IPR018215">
    <property type="entry name" value="ClpP_Ser_AS"/>
</dbReference>
<dbReference type="NCBIfam" id="TIGR00493">
    <property type="entry name" value="clpP"/>
    <property type="match status" value="1"/>
</dbReference>
<dbReference type="NCBIfam" id="NF001368">
    <property type="entry name" value="PRK00277.1"/>
    <property type="match status" value="1"/>
</dbReference>
<dbReference type="NCBIfam" id="NF009205">
    <property type="entry name" value="PRK12553.1"/>
    <property type="match status" value="1"/>
</dbReference>
<dbReference type="PANTHER" id="PTHR10381">
    <property type="entry name" value="ATP-DEPENDENT CLP PROTEASE PROTEOLYTIC SUBUNIT"/>
    <property type="match status" value="1"/>
</dbReference>
<dbReference type="PANTHER" id="PTHR10381:SF70">
    <property type="entry name" value="ATP-DEPENDENT CLP PROTEASE PROTEOLYTIC SUBUNIT"/>
    <property type="match status" value="1"/>
</dbReference>
<dbReference type="Pfam" id="PF00574">
    <property type="entry name" value="CLP_protease"/>
    <property type="match status" value="1"/>
</dbReference>
<dbReference type="PRINTS" id="PR00127">
    <property type="entry name" value="CLPPROTEASEP"/>
</dbReference>
<dbReference type="SUPFAM" id="SSF52096">
    <property type="entry name" value="ClpP/crotonase"/>
    <property type="match status" value="1"/>
</dbReference>
<dbReference type="PROSITE" id="PS00382">
    <property type="entry name" value="CLP_PROTEASE_HIS"/>
    <property type="match status" value="1"/>
</dbReference>
<dbReference type="PROSITE" id="PS00381">
    <property type="entry name" value="CLP_PROTEASE_SER"/>
    <property type="match status" value="1"/>
</dbReference>